<feature type="chain" id="PRO_0000310322" description="Ankyrin repeat-containing protein P16F5.05c">
    <location>
        <begin position="1"/>
        <end position="146"/>
    </location>
</feature>
<feature type="repeat" description="ANK 1">
    <location>
        <begin position="1"/>
        <end position="31"/>
    </location>
</feature>
<feature type="repeat" description="ANK 2">
    <location>
        <begin position="35"/>
        <end position="64"/>
    </location>
</feature>
<feature type="repeat" description="ANK 3">
    <location>
        <begin position="70"/>
        <end position="99"/>
    </location>
</feature>
<feature type="repeat" description="ANK 4">
    <location>
        <begin position="103"/>
        <end position="132"/>
    </location>
</feature>
<proteinExistence type="predicted"/>
<comment type="subcellular location">
    <subcellularLocation>
        <location evidence="1">Cytoplasm</location>
    </subcellularLocation>
    <subcellularLocation>
        <location evidence="1">Nucleus</location>
    </subcellularLocation>
</comment>
<organism>
    <name type="scientific">Schizosaccharomyces pombe (strain 972 / ATCC 24843)</name>
    <name type="common">Fission yeast</name>
    <dbReference type="NCBI Taxonomy" id="284812"/>
    <lineage>
        <taxon>Eukaryota</taxon>
        <taxon>Fungi</taxon>
        <taxon>Dikarya</taxon>
        <taxon>Ascomycota</taxon>
        <taxon>Taphrinomycotina</taxon>
        <taxon>Schizosaccharomycetes</taxon>
        <taxon>Schizosaccharomycetales</taxon>
        <taxon>Schizosaccharomycetaceae</taxon>
        <taxon>Schizosaccharomyces</taxon>
    </lineage>
</organism>
<protein>
    <recommendedName>
        <fullName>Ankyrin repeat-containing protein P16F5.05c</fullName>
    </recommendedName>
</protein>
<keyword id="KW-0040">ANK repeat</keyword>
<keyword id="KW-0963">Cytoplasm</keyword>
<keyword id="KW-0539">Nucleus</keyword>
<keyword id="KW-1185">Reference proteome</keyword>
<keyword id="KW-0677">Repeat</keyword>
<name>YNW5_SCHPO</name>
<dbReference type="EMBL" id="CU329671">
    <property type="protein sequence ID" value="CAC08544.1"/>
    <property type="molecule type" value="Genomic_DNA"/>
</dbReference>
<dbReference type="SMR" id="Q9HFE7"/>
<dbReference type="BioGRID" id="277780">
    <property type="interactions" value="44"/>
</dbReference>
<dbReference type="FunCoup" id="Q9HFE7">
    <property type="interactions" value="32"/>
</dbReference>
<dbReference type="STRING" id="284812.Q9HFE7"/>
<dbReference type="iPTMnet" id="Q9HFE7"/>
<dbReference type="PaxDb" id="4896-SPBP16F5.05c.1"/>
<dbReference type="EnsemblFungi" id="SPBP16F5.05c.1">
    <property type="protein sequence ID" value="SPBP16F5.05c.1:pep"/>
    <property type="gene ID" value="SPBP16F5.05c"/>
</dbReference>
<dbReference type="KEGG" id="spo:2541266"/>
<dbReference type="PomBase" id="SPBP16F5.05c"/>
<dbReference type="VEuPathDB" id="FungiDB:SPBP16F5.05c"/>
<dbReference type="eggNOG" id="KOG0504">
    <property type="taxonomic scope" value="Eukaryota"/>
</dbReference>
<dbReference type="HOGENOM" id="CLU_000134_20_0_1"/>
<dbReference type="InParanoid" id="Q9HFE7"/>
<dbReference type="OMA" id="EAENVGW"/>
<dbReference type="PhylomeDB" id="Q9HFE7"/>
<dbReference type="PRO" id="PR:Q9HFE7"/>
<dbReference type="Proteomes" id="UP000002485">
    <property type="component" value="Chromosome II"/>
</dbReference>
<dbReference type="GO" id="GO:0005829">
    <property type="term" value="C:cytosol"/>
    <property type="evidence" value="ECO:0007005"/>
    <property type="project" value="PomBase"/>
</dbReference>
<dbReference type="GO" id="GO:0005634">
    <property type="term" value="C:nucleus"/>
    <property type="evidence" value="ECO:0007005"/>
    <property type="project" value="PomBase"/>
</dbReference>
<dbReference type="GO" id="GO:0030688">
    <property type="term" value="C:preribosome, small subunit precursor"/>
    <property type="evidence" value="ECO:0000250"/>
    <property type="project" value="PomBase"/>
</dbReference>
<dbReference type="GO" id="GO:0042254">
    <property type="term" value="P:ribosome biogenesis"/>
    <property type="evidence" value="ECO:0000250"/>
    <property type="project" value="PomBase"/>
</dbReference>
<dbReference type="Gene3D" id="1.25.40.20">
    <property type="entry name" value="Ankyrin repeat-containing domain"/>
    <property type="match status" value="1"/>
</dbReference>
<dbReference type="InterPro" id="IPR002110">
    <property type="entry name" value="Ankyrin_rpt"/>
</dbReference>
<dbReference type="InterPro" id="IPR036770">
    <property type="entry name" value="Ankyrin_rpt-contain_sf"/>
</dbReference>
<dbReference type="PANTHER" id="PTHR24171">
    <property type="entry name" value="ANKYRIN REPEAT DOMAIN-CONTAINING PROTEIN 39-RELATED"/>
    <property type="match status" value="1"/>
</dbReference>
<dbReference type="PANTHER" id="PTHR24171:SF8">
    <property type="entry name" value="BRCA1-ASSOCIATED RING DOMAIN PROTEIN 1"/>
    <property type="match status" value="1"/>
</dbReference>
<dbReference type="Pfam" id="PF12796">
    <property type="entry name" value="Ank_2"/>
    <property type="match status" value="1"/>
</dbReference>
<dbReference type="PRINTS" id="PR01415">
    <property type="entry name" value="ANKYRIN"/>
</dbReference>
<dbReference type="SMART" id="SM00248">
    <property type="entry name" value="ANK"/>
    <property type="match status" value="3"/>
</dbReference>
<dbReference type="SUPFAM" id="SSF48403">
    <property type="entry name" value="Ankyrin repeat"/>
    <property type="match status" value="1"/>
</dbReference>
<dbReference type="PROSITE" id="PS50297">
    <property type="entry name" value="ANK_REP_REGION"/>
    <property type="match status" value="1"/>
</dbReference>
<dbReference type="PROSITE" id="PS50088">
    <property type="entry name" value="ANK_REPEAT"/>
    <property type="match status" value="1"/>
</dbReference>
<accession>Q9HFE7</accession>
<sequence>MDVDDLIYACRAADEELLDEIIEKCPQELSRRDENGNSGLHMASANGHIAVVQKIIPYLNKEVINAQNESGNTAMHWAALNGHAEICKLLLEAGGDPHIKNIYEKSPIYEADIRNQQKVMDLFLDFEIAKGSEENTGDEEKLEDGI</sequence>
<evidence type="ECO:0000269" key="1">
    <source>
    </source>
</evidence>
<reference key="1">
    <citation type="journal article" date="2002" name="Nature">
        <title>The genome sequence of Schizosaccharomyces pombe.</title>
        <authorList>
            <person name="Wood V."/>
            <person name="Gwilliam R."/>
            <person name="Rajandream M.A."/>
            <person name="Lyne M.H."/>
            <person name="Lyne R."/>
            <person name="Stewart A."/>
            <person name="Sgouros J.G."/>
            <person name="Peat N."/>
            <person name="Hayles J."/>
            <person name="Baker S.G."/>
            <person name="Basham D."/>
            <person name="Bowman S."/>
            <person name="Brooks K."/>
            <person name="Brown D."/>
            <person name="Brown S."/>
            <person name="Chillingworth T."/>
            <person name="Churcher C.M."/>
            <person name="Collins M."/>
            <person name="Connor R."/>
            <person name="Cronin A."/>
            <person name="Davis P."/>
            <person name="Feltwell T."/>
            <person name="Fraser A."/>
            <person name="Gentles S."/>
            <person name="Goble A."/>
            <person name="Hamlin N."/>
            <person name="Harris D.E."/>
            <person name="Hidalgo J."/>
            <person name="Hodgson G."/>
            <person name="Holroyd S."/>
            <person name="Hornsby T."/>
            <person name="Howarth S."/>
            <person name="Huckle E.J."/>
            <person name="Hunt S."/>
            <person name="Jagels K."/>
            <person name="James K.D."/>
            <person name="Jones L."/>
            <person name="Jones M."/>
            <person name="Leather S."/>
            <person name="McDonald S."/>
            <person name="McLean J."/>
            <person name="Mooney P."/>
            <person name="Moule S."/>
            <person name="Mungall K.L."/>
            <person name="Murphy L.D."/>
            <person name="Niblett D."/>
            <person name="Odell C."/>
            <person name="Oliver K."/>
            <person name="O'Neil S."/>
            <person name="Pearson D."/>
            <person name="Quail M.A."/>
            <person name="Rabbinowitsch E."/>
            <person name="Rutherford K.M."/>
            <person name="Rutter S."/>
            <person name="Saunders D."/>
            <person name="Seeger K."/>
            <person name="Sharp S."/>
            <person name="Skelton J."/>
            <person name="Simmonds M.N."/>
            <person name="Squares R."/>
            <person name="Squares S."/>
            <person name="Stevens K."/>
            <person name="Taylor K."/>
            <person name="Taylor R.G."/>
            <person name="Tivey A."/>
            <person name="Walsh S.V."/>
            <person name="Warren T."/>
            <person name="Whitehead S."/>
            <person name="Woodward J.R."/>
            <person name="Volckaert G."/>
            <person name="Aert R."/>
            <person name="Robben J."/>
            <person name="Grymonprez B."/>
            <person name="Weltjens I."/>
            <person name="Vanstreels E."/>
            <person name="Rieger M."/>
            <person name="Schaefer M."/>
            <person name="Mueller-Auer S."/>
            <person name="Gabel C."/>
            <person name="Fuchs M."/>
            <person name="Duesterhoeft A."/>
            <person name="Fritzc C."/>
            <person name="Holzer E."/>
            <person name="Moestl D."/>
            <person name="Hilbert H."/>
            <person name="Borzym K."/>
            <person name="Langer I."/>
            <person name="Beck A."/>
            <person name="Lehrach H."/>
            <person name="Reinhardt R."/>
            <person name="Pohl T.M."/>
            <person name="Eger P."/>
            <person name="Zimmermann W."/>
            <person name="Wedler H."/>
            <person name="Wambutt R."/>
            <person name="Purnelle B."/>
            <person name="Goffeau A."/>
            <person name="Cadieu E."/>
            <person name="Dreano S."/>
            <person name="Gloux S."/>
            <person name="Lelaure V."/>
            <person name="Mottier S."/>
            <person name="Galibert F."/>
            <person name="Aves S.J."/>
            <person name="Xiang Z."/>
            <person name="Hunt C."/>
            <person name="Moore K."/>
            <person name="Hurst S.M."/>
            <person name="Lucas M."/>
            <person name="Rochet M."/>
            <person name="Gaillardin C."/>
            <person name="Tallada V.A."/>
            <person name="Garzon A."/>
            <person name="Thode G."/>
            <person name="Daga R.R."/>
            <person name="Cruzado L."/>
            <person name="Jimenez J."/>
            <person name="Sanchez M."/>
            <person name="del Rey F."/>
            <person name="Benito J."/>
            <person name="Dominguez A."/>
            <person name="Revuelta J.L."/>
            <person name="Moreno S."/>
            <person name="Armstrong J."/>
            <person name="Forsburg S.L."/>
            <person name="Cerutti L."/>
            <person name="Lowe T."/>
            <person name="McCombie W.R."/>
            <person name="Paulsen I."/>
            <person name="Potashkin J."/>
            <person name="Shpakovski G.V."/>
            <person name="Ussery D."/>
            <person name="Barrell B.G."/>
            <person name="Nurse P."/>
        </authorList>
    </citation>
    <scope>NUCLEOTIDE SEQUENCE [LARGE SCALE GENOMIC DNA]</scope>
    <source>
        <strain>972 / ATCC 24843</strain>
    </source>
</reference>
<reference key="2">
    <citation type="journal article" date="2006" name="Nat. Biotechnol.">
        <title>ORFeome cloning and global analysis of protein localization in the fission yeast Schizosaccharomyces pombe.</title>
        <authorList>
            <person name="Matsuyama A."/>
            <person name="Arai R."/>
            <person name="Yashiroda Y."/>
            <person name="Shirai A."/>
            <person name="Kamata A."/>
            <person name="Sekido S."/>
            <person name="Kobayashi Y."/>
            <person name="Hashimoto A."/>
            <person name="Hamamoto M."/>
            <person name="Hiraoka Y."/>
            <person name="Horinouchi S."/>
            <person name="Yoshida M."/>
        </authorList>
    </citation>
    <scope>SUBCELLULAR LOCATION [LARGE SCALE ANALYSIS]</scope>
</reference>
<gene>
    <name type="ORF">SPBP16F5.05c</name>
</gene>